<feature type="chain" id="PRO_0000103279" description="Probable branched-chain-amino-acid aminotransferase">
    <location>
        <begin position="1"/>
        <end position="358"/>
    </location>
</feature>
<feature type="modified residue" description="N6-(pyridoxal phosphate)lysine" evidence="1">
    <location>
        <position position="196"/>
    </location>
</feature>
<protein>
    <recommendedName>
        <fullName>Probable branched-chain-amino-acid aminotransferase</fullName>
        <shortName>BCAT</shortName>
        <ecNumber>2.6.1.42</ecNumber>
    </recommendedName>
</protein>
<comment type="function">
    <text evidence="1">Acts on leucine, isoleucine and valine.</text>
</comment>
<comment type="catalytic activity">
    <reaction>
        <text>L-leucine + 2-oxoglutarate = 4-methyl-2-oxopentanoate + L-glutamate</text>
        <dbReference type="Rhea" id="RHEA:18321"/>
        <dbReference type="ChEBI" id="CHEBI:16810"/>
        <dbReference type="ChEBI" id="CHEBI:17865"/>
        <dbReference type="ChEBI" id="CHEBI:29985"/>
        <dbReference type="ChEBI" id="CHEBI:57427"/>
        <dbReference type="EC" id="2.6.1.42"/>
    </reaction>
</comment>
<comment type="catalytic activity">
    <reaction>
        <text>L-isoleucine + 2-oxoglutarate = (S)-3-methyl-2-oxopentanoate + L-glutamate</text>
        <dbReference type="Rhea" id="RHEA:24801"/>
        <dbReference type="ChEBI" id="CHEBI:16810"/>
        <dbReference type="ChEBI" id="CHEBI:29985"/>
        <dbReference type="ChEBI" id="CHEBI:35146"/>
        <dbReference type="ChEBI" id="CHEBI:58045"/>
        <dbReference type="EC" id="2.6.1.42"/>
    </reaction>
</comment>
<comment type="catalytic activity">
    <reaction>
        <text>L-valine + 2-oxoglutarate = 3-methyl-2-oxobutanoate + L-glutamate</text>
        <dbReference type="Rhea" id="RHEA:24813"/>
        <dbReference type="ChEBI" id="CHEBI:11851"/>
        <dbReference type="ChEBI" id="CHEBI:16810"/>
        <dbReference type="ChEBI" id="CHEBI:29985"/>
        <dbReference type="ChEBI" id="CHEBI:57762"/>
        <dbReference type="EC" id="2.6.1.42"/>
    </reaction>
</comment>
<comment type="cofactor">
    <cofactor evidence="1">
        <name>pyridoxal 5'-phosphate</name>
        <dbReference type="ChEBI" id="CHEBI:597326"/>
    </cofactor>
</comment>
<comment type="pathway">
    <text>Amino-acid biosynthesis; L-isoleucine biosynthesis; L-isoleucine from 2-oxobutanoate: step 4/4.</text>
</comment>
<comment type="pathway">
    <text>Amino-acid biosynthesis; L-leucine biosynthesis; L-leucine from 3-methyl-2-oxobutanoate: step 4/4.</text>
</comment>
<comment type="pathway">
    <text>Amino-acid biosynthesis; L-valine biosynthesis; L-valine from pyruvate: step 4/4.</text>
</comment>
<comment type="similarity">
    <text evidence="2">Belongs to the class-IV pyridoxal-phosphate-dependent aminotransferase family.</text>
</comment>
<reference key="1">
    <citation type="journal article" date="2001" name="Lancet">
        <title>Whole genome sequencing of meticillin-resistant Staphylococcus aureus.</title>
        <authorList>
            <person name="Kuroda M."/>
            <person name="Ohta T."/>
            <person name="Uchiyama I."/>
            <person name="Baba T."/>
            <person name="Yuzawa H."/>
            <person name="Kobayashi I."/>
            <person name="Cui L."/>
            <person name="Oguchi A."/>
            <person name="Aoki K."/>
            <person name="Nagai Y."/>
            <person name="Lian J.-Q."/>
            <person name="Ito T."/>
            <person name="Kanamori M."/>
            <person name="Matsumaru H."/>
            <person name="Maruyama A."/>
            <person name="Murakami H."/>
            <person name="Hosoyama A."/>
            <person name="Mizutani-Ui Y."/>
            <person name="Takahashi N.K."/>
            <person name="Sawano T."/>
            <person name="Inoue R."/>
            <person name="Kaito C."/>
            <person name="Sekimizu K."/>
            <person name="Hirakawa H."/>
            <person name="Kuhara S."/>
            <person name="Goto S."/>
            <person name="Yabuzaki J."/>
            <person name="Kanehisa M."/>
            <person name="Yamashita A."/>
            <person name="Oshima K."/>
            <person name="Furuya K."/>
            <person name="Yoshino C."/>
            <person name="Shiba T."/>
            <person name="Hattori M."/>
            <person name="Ogasawara N."/>
            <person name="Hayashi H."/>
            <person name="Hiramatsu K."/>
        </authorList>
    </citation>
    <scope>NUCLEOTIDE SEQUENCE [LARGE SCALE GENOMIC DNA]</scope>
    <source>
        <strain>N315</strain>
    </source>
</reference>
<reference key="2">
    <citation type="journal article" date="2005" name="J. Microbiol. Methods">
        <title>Correlation of proteomic and transcriptomic profiles of Staphylococcus aureus during the post-exponential phase of growth.</title>
        <authorList>
            <person name="Scherl A."/>
            <person name="Francois P."/>
            <person name="Bento M."/>
            <person name="Deshusses J.M."/>
            <person name="Charbonnier Y."/>
            <person name="Converset V."/>
            <person name="Huyghe A."/>
            <person name="Walter N."/>
            <person name="Hoogland C."/>
            <person name="Appel R.D."/>
            <person name="Sanchez J.-C."/>
            <person name="Zimmermann-Ivol C.G."/>
            <person name="Corthals G.L."/>
            <person name="Hochstrasser D.F."/>
            <person name="Schrenzel J."/>
        </authorList>
    </citation>
    <scope>IDENTIFICATION BY MASS SPECTROMETRY</scope>
    <source>
        <strain>N315</strain>
    </source>
</reference>
<reference key="3">
    <citation type="submission" date="2007-10" db="UniProtKB">
        <title>Shotgun proteomic analysis of total and membrane protein extracts of S. aureus strain N315.</title>
        <authorList>
            <person name="Vaezzadeh A.R."/>
            <person name="Deshusses J."/>
            <person name="Lescuyer P."/>
            <person name="Hochstrasser D.F."/>
        </authorList>
    </citation>
    <scope>IDENTIFICATION BY MASS SPECTROMETRY [LARGE SCALE ANALYSIS]</scope>
    <source>
        <strain>N315</strain>
    </source>
</reference>
<sequence length="358" mass="40086">MSQAVKVERRETLKQKPNTSQLGFGKYFTDYMLSYDYDADKGWHDLKIVPYGPIEISPAAQGVHYGQSVFEGLKAYKRDGEVALFRPEENFKRLNNSLARLEMPQVDEAELLEGLKQLVDIERDWIPEGEGQSLYIRPFVFATEGALGVGASHQYKLLIILSPSGAYYGGETLKPTKIYVEDEYVRAVRGGVGFAKVAGNYAASLLAQTNANKLGYDQVLWLDGVEQKYIEEVGSMNIFFVENGKVITPELNGSILPGITRKSIIELAKNLGYEVEERRVSIDELFESYDKGELTEVFGSGTAAVISPVGTLRYEDREIVINNNETGEITQKLYDVYTGIQNGTLEDKNGWRVVVPKY</sequence>
<organism>
    <name type="scientific">Staphylococcus aureus (strain N315)</name>
    <dbReference type="NCBI Taxonomy" id="158879"/>
    <lineage>
        <taxon>Bacteria</taxon>
        <taxon>Bacillati</taxon>
        <taxon>Bacillota</taxon>
        <taxon>Bacilli</taxon>
        <taxon>Bacillales</taxon>
        <taxon>Staphylococcaceae</taxon>
        <taxon>Staphylococcus</taxon>
    </lineage>
</organism>
<name>ILVE_STAAN</name>
<proteinExistence type="evidence at protein level"/>
<evidence type="ECO:0000250" key="1"/>
<evidence type="ECO:0000305" key="2"/>
<keyword id="KW-0028">Amino-acid biosynthesis</keyword>
<keyword id="KW-0032">Aminotransferase</keyword>
<keyword id="KW-0100">Branched-chain amino acid biosynthesis</keyword>
<keyword id="KW-0663">Pyridoxal phosphate</keyword>
<keyword id="KW-0808">Transferase</keyword>
<gene>
    <name type="primary">ilvE</name>
    <name type="ordered locus">SA0512</name>
</gene>
<accession>P99138</accession>
<accession>Q99W55</accession>
<dbReference type="EC" id="2.6.1.42"/>
<dbReference type="EMBL" id="BA000018">
    <property type="protein sequence ID" value="BAB41743.1"/>
    <property type="molecule type" value="Genomic_DNA"/>
</dbReference>
<dbReference type="PIR" id="D89823">
    <property type="entry name" value="D89823"/>
</dbReference>
<dbReference type="RefSeq" id="WP_000076036.1">
    <property type="nucleotide sequence ID" value="NC_002745.2"/>
</dbReference>
<dbReference type="SMR" id="P99138"/>
<dbReference type="EnsemblBacteria" id="BAB41743">
    <property type="protein sequence ID" value="BAB41743"/>
    <property type="gene ID" value="BAB41743"/>
</dbReference>
<dbReference type="KEGG" id="sau:SA0512"/>
<dbReference type="HOGENOM" id="CLU_031922_0_2_9"/>
<dbReference type="UniPathway" id="UPA00047">
    <property type="reaction ID" value="UER00058"/>
</dbReference>
<dbReference type="UniPathway" id="UPA00048">
    <property type="reaction ID" value="UER00073"/>
</dbReference>
<dbReference type="UniPathway" id="UPA00049">
    <property type="reaction ID" value="UER00062"/>
</dbReference>
<dbReference type="GO" id="GO:0052656">
    <property type="term" value="F:L-isoleucine-2-oxoglutarate transaminase activity"/>
    <property type="evidence" value="ECO:0007669"/>
    <property type="project" value="RHEA"/>
</dbReference>
<dbReference type="GO" id="GO:0052654">
    <property type="term" value="F:L-leucine-2-oxoglutarate transaminase activity"/>
    <property type="evidence" value="ECO:0007669"/>
    <property type="project" value="RHEA"/>
</dbReference>
<dbReference type="GO" id="GO:0052655">
    <property type="term" value="F:L-valine-2-oxoglutarate transaminase activity"/>
    <property type="evidence" value="ECO:0007669"/>
    <property type="project" value="RHEA"/>
</dbReference>
<dbReference type="GO" id="GO:0009097">
    <property type="term" value="P:isoleucine biosynthetic process"/>
    <property type="evidence" value="ECO:0007669"/>
    <property type="project" value="UniProtKB-UniPathway"/>
</dbReference>
<dbReference type="GO" id="GO:0009098">
    <property type="term" value="P:L-leucine biosynthetic process"/>
    <property type="evidence" value="ECO:0007669"/>
    <property type="project" value="UniProtKB-UniPathway"/>
</dbReference>
<dbReference type="GO" id="GO:0009099">
    <property type="term" value="P:L-valine biosynthetic process"/>
    <property type="evidence" value="ECO:0007669"/>
    <property type="project" value="UniProtKB-UniPathway"/>
</dbReference>
<dbReference type="CDD" id="cd01557">
    <property type="entry name" value="BCAT_beta_family"/>
    <property type="match status" value="1"/>
</dbReference>
<dbReference type="Gene3D" id="3.30.470.10">
    <property type="match status" value="1"/>
</dbReference>
<dbReference type="Gene3D" id="3.20.10.10">
    <property type="entry name" value="D-amino Acid Aminotransferase, subunit A, domain 2"/>
    <property type="match status" value="1"/>
</dbReference>
<dbReference type="InterPro" id="IPR001544">
    <property type="entry name" value="Aminotrans_IV"/>
</dbReference>
<dbReference type="InterPro" id="IPR018300">
    <property type="entry name" value="Aminotrans_IV_CS"/>
</dbReference>
<dbReference type="InterPro" id="IPR036038">
    <property type="entry name" value="Aminotransferase-like"/>
</dbReference>
<dbReference type="InterPro" id="IPR005786">
    <property type="entry name" value="B_amino_transII"/>
</dbReference>
<dbReference type="InterPro" id="IPR043132">
    <property type="entry name" value="BCAT-like_C"/>
</dbReference>
<dbReference type="InterPro" id="IPR043131">
    <property type="entry name" value="BCAT-like_N"/>
</dbReference>
<dbReference type="InterPro" id="IPR033939">
    <property type="entry name" value="BCAT_family"/>
</dbReference>
<dbReference type="NCBIfam" id="TIGR01123">
    <property type="entry name" value="ilvE_II"/>
    <property type="match status" value="1"/>
</dbReference>
<dbReference type="NCBIfam" id="NF009897">
    <property type="entry name" value="PRK13357.1"/>
    <property type="match status" value="1"/>
</dbReference>
<dbReference type="PANTHER" id="PTHR11825:SF44">
    <property type="entry name" value="BRANCHED-CHAIN-AMINO-ACID AMINOTRANSFERASE"/>
    <property type="match status" value="1"/>
</dbReference>
<dbReference type="PANTHER" id="PTHR11825">
    <property type="entry name" value="SUBGROUP IIII AMINOTRANSFERASE"/>
    <property type="match status" value="1"/>
</dbReference>
<dbReference type="Pfam" id="PF01063">
    <property type="entry name" value="Aminotran_4"/>
    <property type="match status" value="1"/>
</dbReference>
<dbReference type="PIRSF" id="PIRSF006468">
    <property type="entry name" value="BCAT1"/>
    <property type="match status" value="1"/>
</dbReference>
<dbReference type="SUPFAM" id="SSF56752">
    <property type="entry name" value="D-aminoacid aminotransferase-like PLP-dependent enzymes"/>
    <property type="match status" value="1"/>
</dbReference>
<dbReference type="PROSITE" id="PS00770">
    <property type="entry name" value="AA_TRANSFER_CLASS_4"/>
    <property type="match status" value="1"/>
</dbReference>